<dbReference type="EMBL" id="CP001131">
    <property type="protein sequence ID" value="ACG75689.1"/>
    <property type="molecule type" value="Genomic_DNA"/>
</dbReference>
<dbReference type="RefSeq" id="WP_012528432.1">
    <property type="nucleotide sequence ID" value="NC_011145.1"/>
</dbReference>
<dbReference type="SMR" id="B4UKF3"/>
<dbReference type="KEGG" id="ank:AnaeK_4487"/>
<dbReference type="HOGENOM" id="CLU_085114_1_1_7"/>
<dbReference type="OrthoDB" id="9802471at2"/>
<dbReference type="Proteomes" id="UP000001871">
    <property type="component" value="Chromosome"/>
</dbReference>
<dbReference type="GO" id="GO:0005886">
    <property type="term" value="C:plasma membrane"/>
    <property type="evidence" value="ECO:0007669"/>
    <property type="project" value="UniProtKB-SubCell"/>
</dbReference>
<dbReference type="GO" id="GO:0045259">
    <property type="term" value="C:proton-transporting ATP synthase complex"/>
    <property type="evidence" value="ECO:0007669"/>
    <property type="project" value="UniProtKB-KW"/>
</dbReference>
<dbReference type="GO" id="GO:0046933">
    <property type="term" value="F:proton-transporting ATP synthase activity, rotational mechanism"/>
    <property type="evidence" value="ECO:0007669"/>
    <property type="project" value="UniProtKB-UniRule"/>
</dbReference>
<dbReference type="Gene3D" id="1.10.520.20">
    <property type="entry name" value="N-terminal domain of the delta subunit of the F1F0-ATP synthase"/>
    <property type="match status" value="1"/>
</dbReference>
<dbReference type="HAMAP" id="MF_01416">
    <property type="entry name" value="ATP_synth_delta_bact"/>
    <property type="match status" value="1"/>
</dbReference>
<dbReference type="InterPro" id="IPR026015">
    <property type="entry name" value="ATP_synth_OSCP/delta_N_sf"/>
</dbReference>
<dbReference type="InterPro" id="IPR000711">
    <property type="entry name" value="ATPase_OSCP/dsu"/>
</dbReference>
<dbReference type="NCBIfam" id="TIGR01145">
    <property type="entry name" value="ATP_synt_delta"/>
    <property type="match status" value="1"/>
</dbReference>
<dbReference type="NCBIfam" id="NF004402">
    <property type="entry name" value="PRK05758.2-2"/>
    <property type="match status" value="1"/>
</dbReference>
<dbReference type="PANTHER" id="PTHR11910">
    <property type="entry name" value="ATP SYNTHASE DELTA CHAIN"/>
    <property type="match status" value="1"/>
</dbReference>
<dbReference type="Pfam" id="PF00213">
    <property type="entry name" value="OSCP"/>
    <property type="match status" value="1"/>
</dbReference>
<dbReference type="PRINTS" id="PR00125">
    <property type="entry name" value="ATPASEDELTA"/>
</dbReference>
<dbReference type="SUPFAM" id="SSF47928">
    <property type="entry name" value="N-terminal domain of the delta subunit of the F1F0-ATP synthase"/>
    <property type="match status" value="1"/>
</dbReference>
<name>ATPD_ANASK</name>
<proteinExistence type="inferred from homology"/>
<comment type="function">
    <text evidence="1">F(1)F(0) ATP synthase produces ATP from ADP in the presence of a proton or sodium gradient. F-type ATPases consist of two structural domains, F(1) containing the extramembraneous catalytic core and F(0) containing the membrane proton channel, linked together by a central stalk and a peripheral stalk. During catalysis, ATP synthesis in the catalytic domain of F(1) is coupled via a rotary mechanism of the central stalk subunits to proton translocation.</text>
</comment>
<comment type="function">
    <text evidence="1">This protein is part of the stalk that links CF(0) to CF(1). It either transmits conformational changes from CF(0) to CF(1) or is implicated in proton conduction.</text>
</comment>
<comment type="subunit">
    <text evidence="1">F-type ATPases have 2 components, F(1) - the catalytic core - and F(0) - the membrane proton channel. F(1) has five subunits: alpha(3), beta(3), gamma(1), delta(1), epsilon(1). F(0) has three main subunits: a(1), b(2) and c(10-14). The alpha and beta chains form an alternating ring which encloses part of the gamma chain. F(1) is attached to F(0) by a central stalk formed by the gamma and epsilon chains, while a peripheral stalk is formed by the delta and b chains.</text>
</comment>
<comment type="subcellular location">
    <subcellularLocation>
        <location evidence="1">Cell inner membrane</location>
        <topology evidence="1">Peripheral membrane protein</topology>
    </subcellularLocation>
</comment>
<comment type="similarity">
    <text evidence="1">Belongs to the ATPase delta chain family.</text>
</comment>
<reference key="1">
    <citation type="submission" date="2008-08" db="EMBL/GenBank/DDBJ databases">
        <title>Complete sequence of Anaeromyxobacter sp. K.</title>
        <authorList>
            <consortium name="US DOE Joint Genome Institute"/>
            <person name="Lucas S."/>
            <person name="Copeland A."/>
            <person name="Lapidus A."/>
            <person name="Glavina del Rio T."/>
            <person name="Dalin E."/>
            <person name="Tice H."/>
            <person name="Bruce D."/>
            <person name="Goodwin L."/>
            <person name="Pitluck S."/>
            <person name="Saunders E."/>
            <person name="Brettin T."/>
            <person name="Detter J.C."/>
            <person name="Han C."/>
            <person name="Larimer F."/>
            <person name="Land M."/>
            <person name="Hauser L."/>
            <person name="Kyrpides N."/>
            <person name="Ovchinnikiva G."/>
            <person name="Beliaev A."/>
        </authorList>
    </citation>
    <scope>NUCLEOTIDE SEQUENCE [LARGE SCALE GENOMIC DNA]</scope>
    <source>
        <strain>K</strain>
    </source>
</reference>
<gene>
    <name evidence="1" type="primary">atpH</name>
    <name type="ordered locus">AnaeK_4487</name>
</gene>
<accession>B4UKF3</accession>
<keyword id="KW-0066">ATP synthesis</keyword>
<keyword id="KW-0997">Cell inner membrane</keyword>
<keyword id="KW-1003">Cell membrane</keyword>
<keyword id="KW-0139">CF(1)</keyword>
<keyword id="KW-0375">Hydrogen ion transport</keyword>
<keyword id="KW-0406">Ion transport</keyword>
<keyword id="KW-0472">Membrane</keyword>
<keyword id="KW-0813">Transport</keyword>
<feature type="chain" id="PRO_0000370881" description="ATP synthase subunit delta">
    <location>
        <begin position="1"/>
        <end position="179"/>
    </location>
</feature>
<evidence type="ECO:0000255" key="1">
    <source>
        <dbReference type="HAMAP-Rule" id="MF_01416"/>
    </source>
</evidence>
<sequence>MLMGSIARRYARALFSLAVEQGRVEPWNDALQVLKNAVEGSPDLRDVLSNPVYSKEQRRAIVEKLASALKLEREPANLLFLLGDRNRLAYLAAVVDTFRSLADQHLGRLRARVTSAVPLDASAAQAIADRLSQATKATVLLDRAVDPALLGGVVAQVGSLVYDGSLRTQLEDLRKTLKQ</sequence>
<organism>
    <name type="scientific">Anaeromyxobacter sp. (strain K)</name>
    <dbReference type="NCBI Taxonomy" id="447217"/>
    <lineage>
        <taxon>Bacteria</taxon>
        <taxon>Pseudomonadati</taxon>
        <taxon>Myxococcota</taxon>
        <taxon>Myxococcia</taxon>
        <taxon>Myxococcales</taxon>
        <taxon>Cystobacterineae</taxon>
        <taxon>Anaeromyxobacteraceae</taxon>
        <taxon>Anaeromyxobacter</taxon>
    </lineage>
</organism>
<protein>
    <recommendedName>
        <fullName evidence="1">ATP synthase subunit delta</fullName>
    </recommendedName>
    <alternativeName>
        <fullName evidence="1">ATP synthase F(1) sector subunit delta</fullName>
    </alternativeName>
    <alternativeName>
        <fullName evidence="1">F-type ATPase subunit delta</fullName>
        <shortName evidence="1">F-ATPase subunit delta</shortName>
    </alternativeName>
</protein>